<feature type="chain" id="PRO_0000421352" description="WAT1-related protein At5g64700">
    <location>
        <begin position="1"/>
        <end position="359"/>
    </location>
</feature>
<feature type="transmembrane region" description="Helical" evidence="2">
    <location>
        <begin position="10"/>
        <end position="30"/>
    </location>
</feature>
<feature type="transmembrane region" description="Helical" evidence="2">
    <location>
        <begin position="37"/>
        <end position="57"/>
    </location>
</feature>
<feature type="transmembrane region" description="Helical" evidence="2">
    <location>
        <begin position="66"/>
        <end position="86"/>
    </location>
</feature>
<feature type="transmembrane region" description="Helical" evidence="2">
    <location>
        <begin position="100"/>
        <end position="120"/>
    </location>
</feature>
<feature type="transmembrane region" description="Helical" evidence="2">
    <location>
        <begin position="135"/>
        <end position="155"/>
    </location>
</feature>
<feature type="transmembrane region" description="Helical" evidence="2">
    <location>
        <begin position="186"/>
        <end position="206"/>
    </location>
</feature>
<feature type="transmembrane region" description="Helical" evidence="2">
    <location>
        <begin position="218"/>
        <end position="238"/>
    </location>
</feature>
<feature type="transmembrane region" description="Helical" evidence="2">
    <location>
        <begin position="256"/>
        <end position="276"/>
    </location>
</feature>
<feature type="transmembrane region" description="Helical" evidence="2">
    <location>
        <begin position="282"/>
        <end position="302"/>
    </location>
</feature>
<feature type="transmembrane region" description="Helical" evidence="2">
    <location>
        <begin position="306"/>
        <end position="326"/>
    </location>
</feature>
<feature type="domain" description="EamA 1">
    <location>
        <begin position="18"/>
        <end position="136"/>
    </location>
</feature>
<feature type="domain" description="EamA 2">
    <location>
        <begin position="198"/>
        <end position="326"/>
    </location>
</feature>
<keyword id="KW-0472">Membrane</keyword>
<keyword id="KW-1185">Reference proteome</keyword>
<keyword id="KW-0677">Repeat</keyword>
<keyword id="KW-0812">Transmembrane</keyword>
<keyword id="KW-1133">Transmembrane helix</keyword>
<comment type="subcellular location">
    <subcellularLocation>
        <location evidence="1">Membrane</location>
        <topology evidence="3">Multi-pass membrane protein</topology>
    </subcellularLocation>
</comment>
<comment type="similarity">
    <text evidence="3">Belongs to the drug/metabolite transporter (DMT) superfamily. Plant drug/metabolite exporter (P-DME) (TC 2.A.7.4) family.</text>
</comment>
<accession>Q9FGG3</accession>
<dbReference type="EMBL" id="AB025637">
    <property type="protein sequence ID" value="BAB10303.1"/>
    <property type="molecule type" value="Genomic_DNA"/>
</dbReference>
<dbReference type="EMBL" id="CP002688">
    <property type="protein sequence ID" value="AED97940.1"/>
    <property type="molecule type" value="Genomic_DNA"/>
</dbReference>
<dbReference type="RefSeq" id="NP_201275.1">
    <property type="nucleotide sequence ID" value="NM_125866.3"/>
</dbReference>
<dbReference type="SMR" id="Q9FGG3"/>
<dbReference type="STRING" id="3702.Q9FGG3"/>
<dbReference type="PaxDb" id="3702-AT5G64700.1"/>
<dbReference type="EnsemblPlants" id="AT5G64700.1">
    <property type="protein sequence ID" value="AT5G64700.1"/>
    <property type="gene ID" value="AT5G64700"/>
</dbReference>
<dbReference type="GeneID" id="836591"/>
<dbReference type="Gramene" id="AT5G64700.1">
    <property type="protein sequence ID" value="AT5G64700.1"/>
    <property type="gene ID" value="AT5G64700"/>
</dbReference>
<dbReference type="KEGG" id="ath:AT5G64700"/>
<dbReference type="Araport" id="AT5G64700"/>
<dbReference type="TAIR" id="AT5G64700">
    <property type="gene designation" value="UMAMIT21"/>
</dbReference>
<dbReference type="eggNOG" id="ENOG502QUJ3">
    <property type="taxonomic scope" value="Eukaryota"/>
</dbReference>
<dbReference type="HOGENOM" id="CLU_025359_1_0_1"/>
<dbReference type="InParanoid" id="Q9FGG3"/>
<dbReference type="OMA" id="NDVVCNE"/>
<dbReference type="OrthoDB" id="1718296at2759"/>
<dbReference type="PhylomeDB" id="Q9FGG3"/>
<dbReference type="PRO" id="PR:Q9FGG3"/>
<dbReference type="Proteomes" id="UP000006548">
    <property type="component" value="Chromosome 5"/>
</dbReference>
<dbReference type="ExpressionAtlas" id="Q9FGG3">
    <property type="expression patterns" value="baseline and differential"/>
</dbReference>
<dbReference type="GO" id="GO:0016020">
    <property type="term" value="C:membrane"/>
    <property type="evidence" value="ECO:0007669"/>
    <property type="project" value="UniProtKB-SubCell"/>
</dbReference>
<dbReference type="GO" id="GO:0022857">
    <property type="term" value="F:transmembrane transporter activity"/>
    <property type="evidence" value="ECO:0007669"/>
    <property type="project" value="InterPro"/>
</dbReference>
<dbReference type="InterPro" id="IPR000620">
    <property type="entry name" value="EamA_dom"/>
</dbReference>
<dbReference type="InterPro" id="IPR030184">
    <property type="entry name" value="WAT1-related"/>
</dbReference>
<dbReference type="PANTHER" id="PTHR31218">
    <property type="entry name" value="WAT1-RELATED PROTEIN"/>
    <property type="match status" value="1"/>
</dbReference>
<dbReference type="Pfam" id="PF00892">
    <property type="entry name" value="EamA"/>
    <property type="match status" value="2"/>
</dbReference>
<dbReference type="SUPFAM" id="SSF103481">
    <property type="entry name" value="Multidrug resistance efflux transporter EmrE"/>
    <property type="match status" value="2"/>
</dbReference>
<organism>
    <name type="scientific">Arabidopsis thaliana</name>
    <name type="common">Mouse-ear cress</name>
    <dbReference type="NCBI Taxonomy" id="3702"/>
    <lineage>
        <taxon>Eukaryota</taxon>
        <taxon>Viridiplantae</taxon>
        <taxon>Streptophyta</taxon>
        <taxon>Embryophyta</taxon>
        <taxon>Tracheophyta</taxon>
        <taxon>Spermatophyta</taxon>
        <taxon>Magnoliopsida</taxon>
        <taxon>eudicotyledons</taxon>
        <taxon>Gunneridae</taxon>
        <taxon>Pentapetalae</taxon>
        <taxon>rosids</taxon>
        <taxon>malvids</taxon>
        <taxon>Brassicales</taxon>
        <taxon>Brassicaceae</taxon>
        <taxon>Camelineae</taxon>
        <taxon>Arabidopsis</taxon>
    </lineage>
</organism>
<gene>
    <name type="ordered locus">At5g64700</name>
    <name type="ORF">MVP7.2</name>
</gene>
<proteinExistence type="evidence at transcript level"/>
<protein>
    <recommendedName>
        <fullName>WAT1-related protein At5g64700</fullName>
    </recommendedName>
</protein>
<name>WTR45_ARATH</name>
<sequence length="359" mass="39753">MDMESKKPYLMVTIIQVIYTIMFLISKAVFNGGMNTFVFVFYRQAFATIFLAPLAFFFERKSAPPLSFVTFIKIFMLSLFGVTLSLDLNGIALSYTSATLAAATTASLPAITFFLALLFGMERLKVKSIQGTAKLVGITVCMGGVIILAIYKGPLLKLPLCPHFYHGQEHPHRNNPGHVSGGSTSWLKGCVLMITSNILWGLWLVLQGRVLKVYPSKLYFTTLHCLLSSIQSFVIAIALERDISAWKLGWNLRLVAVIYCGFIVTGVAYYLQSWVIEKRGPVFLSMFTPLSLLFTLLSSAILLCEIISLGSIVGGLLLIIGLYCVLWGKSREEKNSGDDKIDLQKENDVVCNEVKVVIS</sequence>
<reference key="1">
    <citation type="submission" date="1999-04" db="EMBL/GenBank/DDBJ databases">
        <title>Structural analysis of Arabidopsis thaliana chromosome 5. XI.</title>
        <authorList>
            <person name="Kaneko T."/>
            <person name="Katoh T."/>
            <person name="Asamizu E."/>
            <person name="Sato S."/>
            <person name="Nakamura Y."/>
            <person name="Kotani H."/>
            <person name="Tabata S."/>
        </authorList>
    </citation>
    <scope>NUCLEOTIDE SEQUENCE [LARGE SCALE GENOMIC DNA]</scope>
    <source>
        <strain>cv. Columbia</strain>
    </source>
</reference>
<reference key="2">
    <citation type="journal article" date="2017" name="Plant J.">
        <title>Araport11: a complete reannotation of the Arabidopsis thaliana reference genome.</title>
        <authorList>
            <person name="Cheng C.Y."/>
            <person name="Krishnakumar V."/>
            <person name="Chan A.P."/>
            <person name="Thibaud-Nissen F."/>
            <person name="Schobel S."/>
            <person name="Town C.D."/>
        </authorList>
    </citation>
    <scope>GENOME REANNOTATION</scope>
    <source>
        <strain>cv. Columbia</strain>
    </source>
</reference>
<evidence type="ECO:0000250" key="1"/>
<evidence type="ECO:0000255" key="2"/>
<evidence type="ECO:0000305" key="3"/>